<keyword id="KW-1185">Reference proteome</keyword>
<keyword id="KW-0687">Ribonucleoprotein</keyword>
<keyword id="KW-0689">Ribosomal protein</keyword>
<keyword id="KW-0694">RNA-binding</keyword>
<keyword id="KW-0699">rRNA-binding</keyword>
<sequence>MPRSTNKGPFVDHHLMKKVDQAQKEGSKRPIKTWSRRSMVVPEMVGLTIAIHNGRQHVPVYISENMVGHKLGEFAITRTFRAHSGDRKAKKEGEK</sequence>
<feature type="chain" id="PRO_0000129815" description="Small ribosomal subunit protein uS19">
    <location>
        <begin position="1"/>
        <end position="95"/>
    </location>
</feature>
<gene>
    <name evidence="1" type="primary">rpsS</name>
    <name type="ordered locus">CBU_0242</name>
</gene>
<protein>
    <recommendedName>
        <fullName evidence="1">Small ribosomal subunit protein uS19</fullName>
    </recommendedName>
    <alternativeName>
        <fullName evidence="2">30S ribosomal protein S19</fullName>
    </alternativeName>
</protein>
<name>RS19_COXBU</name>
<organism>
    <name type="scientific">Coxiella burnetii (strain RSA 493 / Nine Mile phase I)</name>
    <dbReference type="NCBI Taxonomy" id="227377"/>
    <lineage>
        <taxon>Bacteria</taxon>
        <taxon>Pseudomonadati</taxon>
        <taxon>Pseudomonadota</taxon>
        <taxon>Gammaproteobacteria</taxon>
        <taxon>Legionellales</taxon>
        <taxon>Coxiellaceae</taxon>
        <taxon>Coxiella</taxon>
    </lineage>
</organism>
<evidence type="ECO:0000255" key="1">
    <source>
        <dbReference type="HAMAP-Rule" id="MF_00531"/>
    </source>
</evidence>
<evidence type="ECO:0000305" key="2"/>
<comment type="function">
    <text evidence="1">Protein S19 forms a complex with S13 that binds strongly to the 16S ribosomal RNA.</text>
</comment>
<comment type="similarity">
    <text evidence="1">Belongs to the universal ribosomal protein uS19 family.</text>
</comment>
<proteinExistence type="inferred from homology"/>
<dbReference type="EMBL" id="AE016828">
    <property type="protein sequence ID" value="AAO89800.1"/>
    <property type="molecule type" value="Genomic_DNA"/>
</dbReference>
<dbReference type="RefSeq" id="NP_819286.1">
    <property type="nucleotide sequence ID" value="NC_002971.4"/>
</dbReference>
<dbReference type="RefSeq" id="WP_005771538.1">
    <property type="nucleotide sequence ID" value="NZ_CDBG01000001.1"/>
</dbReference>
<dbReference type="SMR" id="Q83ES0"/>
<dbReference type="STRING" id="227377.CBU_0242"/>
<dbReference type="DNASU" id="1208123"/>
<dbReference type="EnsemblBacteria" id="AAO89800">
    <property type="protein sequence ID" value="AAO89800"/>
    <property type="gene ID" value="CBU_0242"/>
</dbReference>
<dbReference type="GeneID" id="1208123"/>
<dbReference type="KEGG" id="cbu:CBU_0242"/>
<dbReference type="PATRIC" id="fig|227377.7.peg.237"/>
<dbReference type="eggNOG" id="COG0185">
    <property type="taxonomic scope" value="Bacteria"/>
</dbReference>
<dbReference type="HOGENOM" id="CLU_144911_0_1_6"/>
<dbReference type="OrthoDB" id="9797833at2"/>
<dbReference type="Proteomes" id="UP000002671">
    <property type="component" value="Chromosome"/>
</dbReference>
<dbReference type="GO" id="GO:0005737">
    <property type="term" value="C:cytoplasm"/>
    <property type="evidence" value="ECO:0007669"/>
    <property type="project" value="UniProtKB-ARBA"/>
</dbReference>
<dbReference type="GO" id="GO:0015935">
    <property type="term" value="C:small ribosomal subunit"/>
    <property type="evidence" value="ECO:0007669"/>
    <property type="project" value="InterPro"/>
</dbReference>
<dbReference type="GO" id="GO:0019843">
    <property type="term" value="F:rRNA binding"/>
    <property type="evidence" value="ECO:0007669"/>
    <property type="project" value="UniProtKB-UniRule"/>
</dbReference>
<dbReference type="GO" id="GO:0003735">
    <property type="term" value="F:structural constituent of ribosome"/>
    <property type="evidence" value="ECO:0000318"/>
    <property type="project" value="GO_Central"/>
</dbReference>
<dbReference type="GO" id="GO:0000028">
    <property type="term" value="P:ribosomal small subunit assembly"/>
    <property type="evidence" value="ECO:0000318"/>
    <property type="project" value="GO_Central"/>
</dbReference>
<dbReference type="GO" id="GO:0006412">
    <property type="term" value="P:translation"/>
    <property type="evidence" value="ECO:0007669"/>
    <property type="project" value="UniProtKB-UniRule"/>
</dbReference>
<dbReference type="FunFam" id="3.30.860.10:FF:000001">
    <property type="entry name" value="30S ribosomal protein S19"/>
    <property type="match status" value="1"/>
</dbReference>
<dbReference type="Gene3D" id="3.30.860.10">
    <property type="entry name" value="30s Ribosomal Protein S19, Chain A"/>
    <property type="match status" value="1"/>
</dbReference>
<dbReference type="HAMAP" id="MF_00531">
    <property type="entry name" value="Ribosomal_uS19"/>
    <property type="match status" value="1"/>
</dbReference>
<dbReference type="InterPro" id="IPR002222">
    <property type="entry name" value="Ribosomal_uS19"/>
</dbReference>
<dbReference type="InterPro" id="IPR005732">
    <property type="entry name" value="Ribosomal_uS19_bac-type"/>
</dbReference>
<dbReference type="InterPro" id="IPR020934">
    <property type="entry name" value="Ribosomal_uS19_CS"/>
</dbReference>
<dbReference type="InterPro" id="IPR023575">
    <property type="entry name" value="Ribosomal_uS19_SF"/>
</dbReference>
<dbReference type="NCBIfam" id="TIGR01050">
    <property type="entry name" value="rpsS_bact"/>
    <property type="match status" value="1"/>
</dbReference>
<dbReference type="PANTHER" id="PTHR11880">
    <property type="entry name" value="RIBOSOMAL PROTEIN S19P FAMILY MEMBER"/>
    <property type="match status" value="1"/>
</dbReference>
<dbReference type="PANTHER" id="PTHR11880:SF8">
    <property type="entry name" value="SMALL RIBOSOMAL SUBUNIT PROTEIN US19M"/>
    <property type="match status" value="1"/>
</dbReference>
<dbReference type="Pfam" id="PF00203">
    <property type="entry name" value="Ribosomal_S19"/>
    <property type="match status" value="1"/>
</dbReference>
<dbReference type="PIRSF" id="PIRSF002144">
    <property type="entry name" value="Ribosomal_S19"/>
    <property type="match status" value="1"/>
</dbReference>
<dbReference type="PRINTS" id="PR00975">
    <property type="entry name" value="RIBOSOMALS19"/>
</dbReference>
<dbReference type="SUPFAM" id="SSF54570">
    <property type="entry name" value="Ribosomal protein S19"/>
    <property type="match status" value="1"/>
</dbReference>
<dbReference type="PROSITE" id="PS00323">
    <property type="entry name" value="RIBOSOMAL_S19"/>
    <property type="match status" value="1"/>
</dbReference>
<reference key="1">
    <citation type="journal article" date="2003" name="Proc. Natl. Acad. Sci. U.S.A.">
        <title>Complete genome sequence of the Q-fever pathogen, Coxiella burnetii.</title>
        <authorList>
            <person name="Seshadri R."/>
            <person name="Paulsen I.T."/>
            <person name="Eisen J.A."/>
            <person name="Read T.D."/>
            <person name="Nelson K.E."/>
            <person name="Nelson W.C."/>
            <person name="Ward N.L."/>
            <person name="Tettelin H."/>
            <person name="Davidsen T.M."/>
            <person name="Beanan M.J."/>
            <person name="DeBoy R.T."/>
            <person name="Daugherty S.C."/>
            <person name="Brinkac L.M."/>
            <person name="Madupu R."/>
            <person name="Dodson R.J."/>
            <person name="Khouri H.M."/>
            <person name="Lee K.H."/>
            <person name="Carty H.A."/>
            <person name="Scanlan D."/>
            <person name="Heinzen R.A."/>
            <person name="Thompson H.A."/>
            <person name="Samuel J.E."/>
            <person name="Fraser C.M."/>
            <person name="Heidelberg J.F."/>
        </authorList>
    </citation>
    <scope>NUCLEOTIDE SEQUENCE [LARGE SCALE GENOMIC DNA]</scope>
    <source>
        <strain>RSA 493 / Nine Mile phase I</strain>
    </source>
</reference>
<accession>Q83ES0</accession>